<accession>Q03WX5</accession>
<gene>
    <name evidence="1" type="primary">rpsB</name>
    <name type="ordered locus">LEUM_1199</name>
</gene>
<protein>
    <recommendedName>
        <fullName evidence="1">Small ribosomal subunit protein uS2</fullName>
    </recommendedName>
    <alternativeName>
        <fullName evidence="2">30S ribosomal protein S2</fullName>
    </alternativeName>
</protein>
<organism>
    <name type="scientific">Leuconostoc mesenteroides subsp. mesenteroides (strain ATCC 8293 / DSM 20343 / BCRC 11652 / CCM 1803 / JCM 6124 / NCDO 523 / NBRC 100496 / NCIMB 8023 / NCTC 12954 / NRRL B-1118 / 37Y)</name>
    <dbReference type="NCBI Taxonomy" id="203120"/>
    <lineage>
        <taxon>Bacteria</taxon>
        <taxon>Bacillati</taxon>
        <taxon>Bacillota</taxon>
        <taxon>Bacilli</taxon>
        <taxon>Lactobacillales</taxon>
        <taxon>Lactobacillaceae</taxon>
        <taxon>Leuconostoc</taxon>
    </lineage>
</organism>
<feature type="chain" id="PRO_1000003991" description="Small ribosomal subunit protein uS2">
    <location>
        <begin position="1"/>
        <end position="258"/>
    </location>
</feature>
<sequence length="258" mass="28874">MAVISMKELLEAGVHFGHQTRRWDPKMDEYIFTERNGIHIIDLQKTVKLVDEAYNFIRNASTDGANVLFVGTKKQASDAIAEEATRAGQYYINHRWLGGTLTNWNTIKTRIQRLKDLQTMAEDGTFEQLPKKEVVLLNKQREKLEKFLGGIQDMPGLPDVLFVVDPKKEEIAVKEANMLNIPVVAMIDTNANPDVVDVKIPANDDAIRAVRLITSKIADAVIEGRQGQDSAPEDAFVEGDENTESIEEIANIVEEGNN</sequence>
<reference key="1">
    <citation type="journal article" date="2006" name="Proc. Natl. Acad. Sci. U.S.A.">
        <title>Comparative genomics of the lactic acid bacteria.</title>
        <authorList>
            <person name="Makarova K.S."/>
            <person name="Slesarev A."/>
            <person name="Wolf Y.I."/>
            <person name="Sorokin A."/>
            <person name="Mirkin B."/>
            <person name="Koonin E.V."/>
            <person name="Pavlov A."/>
            <person name="Pavlova N."/>
            <person name="Karamychev V."/>
            <person name="Polouchine N."/>
            <person name="Shakhova V."/>
            <person name="Grigoriev I."/>
            <person name="Lou Y."/>
            <person name="Rohksar D."/>
            <person name="Lucas S."/>
            <person name="Huang K."/>
            <person name="Goodstein D.M."/>
            <person name="Hawkins T."/>
            <person name="Plengvidhya V."/>
            <person name="Welker D."/>
            <person name="Hughes J."/>
            <person name="Goh Y."/>
            <person name="Benson A."/>
            <person name="Baldwin K."/>
            <person name="Lee J.-H."/>
            <person name="Diaz-Muniz I."/>
            <person name="Dosti B."/>
            <person name="Smeianov V."/>
            <person name="Wechter W."/>
            <person name="Barabote R."/>
            <person name="Lorca G."/>
            <person name="Altermann E."/>
            <person name="Barrangou R."/>
            <person name="Ganesan B."/>
            <person name="Xie Y."/>
            <person name="Rawsthorne H."/>
            <person name="Tamir D."/>
            <person name="Parker C."/>
            <person name="Breidt F."/>
            <person name="Broadbent J.R."/>
            <person name="Hutkins R."/>
            <person name="O'Sullivan D."/>
            <person name="Steele J."/>
            <person name="Unlu G."/>
            <person name="Saier M.H. Jr."/>
            <person name="Klaenhammer T."/>
            <person name="Richardson P."/>
            <person name="Kozyavkin S."/>
            <person name="Weimer B.C."/>
            <person name="Mills D.A."/>
        </authorList>
    </citation>
    <scope>NUCLEOTIDE SEQUENCE [LARGE SCALE GENOMIC DNA]</scope>
    <source>
        <strain>ATCC 8293 / DSM 20343 / BCRC 11652 / CCM 1803 / JCM 6124 / NCDO 523 / NBRC 100496 / NCIMB 8023 / NCTC 12954 / NRRL B-1118 / 37Y</strain>
    </source>
</reference>
<comment type="similarity">
    <text evidence="1">Belongs to the universal ribosomal protein uS2 family.</text>
</comment>
<keyword id="KW-1185">Reference proteome</keyword>
<keyword id="KW-0687">Ribonucleoprotein</keyword>
<keyword id="KW-0689">Ribosomal protein</keyword>
<dbReference type="EMBL" id="CP000414">
    <property type="protein sequence ID" value="ABJ62297.1"/>
    <property type="molecule type" value="Genomic_DNA"/>
</dbReference>
<dbReference type="RefSeq" id="WP_002814693.1">
    <property type="nucleotide sequence ID" value="NC_008531.1"/>
</dbReference>
<dbReference type="SMR" id="Q03WX5"/>
<dbReference type="EnsemblBacteria" id="ABJ62297">
    <property type="protein sequence ID" value="ABJ62297"/>
    <property type="gene ID" value="LEUM_1199"/>
</dbReference>
<dbReference type="GeneID" id="97503866"/>
<dbReference type="KEGG" id="lme:LEUM_1199"/>
<dbReference type="eggNOG" id="COG0052">
    <property type="taxonomic scope" value="Bacteria"/>
</dbReference>
<dbReference type="HOGENOM" id="CLU_040318_1_2_9"/>
<dbReference type="Proteomes" id="UP000000362">
    <property type="component" value="Chromosome"/>
</dbReference>
<dbReference type="GO" id="GO:0022627">
    <property type="term" value="C:cytosolic small ribosomal subunit"/>
    <property type="evidence" value="ECO:0007669"/>
    <property type="project" value="TreeGrafter"/>
</dbReference>
<dbReference type="GO" id="GO:0003735">
    <property type="term" value="F:structural constituent of ribosome"/>
    <property type="evidence" value="ECO:0007669"/>
    <property type="project" value="InterPro"/>
</dbReference>
<dbReference type="GO" id="GO:0006412">
    <property type="term" value="P:translation"/>
    <property type="evidence" value="ECO:0007669"/>
    <property type="project" value="UniProtKB-UniRule"/>
</dbReference>
<dbReference type="CDD" id="cd01425">
    <property type="entry name" value="RPS2"/>
    <property type="match status" value="1"/>
</dbReference>
<dbReference type="FunFam" id="1.10.287.610:FF:000001">
    <property type="entry name" value="30S ribosomal protein S2"/>
    <property type="match status" value="1"/>
</dbReference>
<dbReference type="Gene3D" id="3.40.50.10490">
    <property type="entry name" value="Glucose-6-phosphate isomerase like protein, domain 1"/>
    <property type="match status" value="1"/>
</dbReference>
<dbReference type="Gene3D" id="1.10.287.610">
    <property type="entry name" value="Helix hairpin bin"/>
    <property type="match status" value="1"/>
</dbReference>
<dbReference type="HAMAP" id="MF_00291_B">
    <property type="entry name" value="Ribosomal_uS2_B"/>
    <property type="match status" value="1"/>
</dbReference>
<dbReference type="InterPro" id="IPR001865">
    <property type="entry name" value="Ribosomal_uS2"/>
</dbReference>
<dbReference type="InterPro" id="IPR005706">
    <property type="entry name" value="Ribosomal_uS2_bac/mit/plastid"/>
</dbReference>
<dbReference type="InterPro" id="IPR018130">
    <property type="entry name" value="Ribosomal_uS2_CS"/>
</dbReference>
<dbReference type="InterPro" id="IPR023591">
    <property type="entry name" value="Ribosomal_uS2_flav_dom_sf"/>
</dbReference>
<dbReference type="NCBIfam" id="TIGR01011">
    <property type="entry name" value="rpsB_bact"/>
    <property type="match status" value="1"/>
</dbReference>
<dbReference type="PANTHER" id="PTHR12534">
    <property type="entry name" value="30S RIBOSOMAL PROTEIN S2 PROKARYOTIC AND ORGANELLAR"/>
    <property type="match status" value="1"/>
</dbReference>
<dbReference type="PANTHER" id="PTHR12534:SF0">
    <property type="entry name" value="SMALL RIBOSOMAL SUBUNIT PROTEIN US2M"/>
    <property type="match status" value="1"/>
</dbReference>
<dbReference type="Pfam" id="PF00318">
    <property type="entry name" value="Ribosomal_S2"/>
    <property type="match status" value="1"/>
</dbReference>
<dbReference type="PRINTS" id="PR00395">
    <property type="entry name" value="RIBOSOMALS2"/>
</dbReference>
<dbReference type="SUPFAM" id="SSF52313">
    <property type="entry name" value="Ribosomal protein S2"/>
    <property type="match status" value="1"/>
</dbReference>
<dbReference type="PROSITE" id="PS00962">
    <property type="entry name" value="RIBOSOMAL_S2_1"/>
    <property type="match status" value="1"/>
</dbReference>
<dbReference type="PROSITE" id="PS00963">
    <property type="entry name" value="RIBOSOMAL_S2_2"/>
    <property type="match status" value="1"/>
</dbReference>
<evidence type="ECO:0000255" key="1">
    <source>
        <dbReference type="HAMAP-Rule" id="MF_00291"/>
    </source>
</evidence>
<evidence type="ECO:0000305" key="2"/>
<proteinExistence type="inferred from homology"/>
<name>RS2_LEUMM</name>